<accession>P00608</accession>
<reference key="1">
    <citation type="journal article" date="1975" name="J. Biol. Chem.">
        <title>Amino acid sequence of a presynaptic neurotoxin from the venom of Notechis scutatus scutatus (Australian tiger snake).</title>
        <authorList>
            <person name="Halpert J."/>
            <person name="Eaker D."/>
        </authorList>
    </citation>
    <scope>PROTEIN SEQUENCE</scope>
    <source>
        <tissue>Venom</tissue>
    </source>
</reference>
<reference key="2">
    <citation type="journal article" date="1990" name="FEBS Lett.">
        <title>On the purification of notexin. Isolation of a single amino acid variant from the venom of Notechis scutatus scutatus.</title>
        <authorList>
            <person name="Chwetzoff S."/>
            <person name="Mollier P."/>
            <person name="Bouet F."/>
            <person name="Rowan E.G."/>
            <person name="Harvey A.L."/>
            <person name="Menez A."/>
        </authorList>
    </citation>
    <scope>PROTEIN SEQUENCE (NOTEXIN-S)</scope>
    <source>
        <tissue>Venom</tissue>
    </source>
</reference>
<reference key="3">
    <citation type="journal article" date="1976" name="FEBS Lett.">
        <title>The role of phospholipase activity in the action of a presynaptic neurotoxin from the venom of Notechis scutatus scutatus (Australian tiger snake).</title>
        <authorList>
            <person name="Halpert J."/>
            <person name="Eaker D."/>
            <person name="Karlsson E."/>
        </authorList>
    </citation>
    <scope>ACTIVE SITE</scope>
</reference>
<reference key="4">
    <citation type="journal article" date="1989" name="Eur. J. Biochem.">
        <title>Tryptophan 110, a residue involved in the toxic activity but not in the enzymatic activity of notexin.</title>
        <authorList>
            <person name="Mollier P."/>
            <person name="Chwetzoff S."/>
            <person name="Bouet F."/>
            <person name="Harvey A.L."/>
            <person name="Menez A."/>
        </authorList>
    </citation>
    <scope>INVOLVEMENT OF TRP-110 IN TOXICITY</scope>
</reference>
<reference key="5">
    <citation type="journal article" date="1995" name="Exp. Toxicol. Pathol.">
        <title>Nephrotoxicity of notexin in experimental mice.</title>
        <authorList>
            <person name="Zimmerman S.E."/>
            <person name="Yong L.C."/>
        </authorList>
    </citation>
    <scope>FUNCTION AS NEPHROTOXIN</scope>
    <source>
        <tissue>Venom</tissue>
    </source>
</reference>
<reference key="6">
    <citation type="journal article" date="1992" name="FEBS Lett.">
        <title>The three-dimensional structure of notexin, a presynaptic neurotoxic phospholipase A2 at 2.0-A resolution.</title>
        <authorList>
            <person name="Westerlund B."/>
            <person name="Nordlund P."/>
            <person name="Uhlim U."/>
            <person name="Eaker D."/>
            <person name="Eklund H."/>
        </authorList>
    </citation>
    <scope>X-RAY CRYSTALLOGRAPHY (2.0 ANGSTROMS)</scope>
    <scope>DISULFIDE BONDS</scope>
</reference>
<name>PA2B_NOTSC</name>
<proteinExistence type="evidence at protein level"/>
<sequence>NLVQFSYLIQCANHGKRPTWHYMDYGCYCGAGGSGTPVDELDRCCKIHDDCYDEAGKKGCFPKMSAYDYYCGENGPYCRNIKKKCLRFVCDCDVEAAFCFAKAPYNNANWNIDTKKRCQ</sequence>
<dbReference type="EC" id="3.1.1.4"/>
<dbReference type="PIR" id="A00749">
    <property type="entry name" value="PSNOAT"/>
</dbReference>
<dbReference type="PIR" id="S08258">
    <property type="entry name" value="PSNOAS"/>
</dbReference>
<dbReference type="PDB" id="1AE7">
    <property type="method" value="X-ray"/>
    <property type="resolution" value="2.00 A"/>
    <property type="chains" value="A=1-119"/>
</dbReference>
<dbReference type="PDB" id="4E4C">
    <property type="method" value="X-ray"/>
    <property type="resolution" value="1.80 A"/>
    <property type="chains" value="A=1-119"/>
</dbReference>
<dbReference type="PDBsum" id="1AE7"/>
<dbReference type="PDBsum" id="4E4C"/>
<dbReference type="SMR" id="P00608"/>
<dbReference type="EvolutionaryTrace" id="P00608"/>
<dbReference type="GO" id="GO:0005576">
    <property type="term" value="C:extracellular region"/>
    <property type="evidence" value="ECO:0007669"/>
    <property type="project" value="UniProtKB-SubCell"/>
</dbReference>
<dbReference type="GO" id="GO:0005509">
    <property type="term" value="F:calcium ion binding"/>
    <property type="evidence" value="ECO:0007669"/>
    <property type="project" value="InterPro"/>
</dbReference>
<dbReference type="GO" id="GO:0047498">
    <property type="term" value="F:calcium-dependent phospholipase A2 activity"/>
    <property type="evidence" value="ECO:0007669"/>
    <property type="project" value="TreeGrafter"/>
</dbReference>
<dbReference type="GO" id="GO:0005543">
    <property type="term" value="F:phospholipid binding"/>
    <property type="evidence" value="ECO:0007669"/>
    <property type="project" value="TreeGrafter"/>
</dbReference>
<dbReference type="GO" id="GO:0090729">
    <property type="term" value="F:toxin activity"/>
    <property type="evidence" value="ECO:0007669"/>
    <property type="project" value="UniProtKB-KW"/>
</dbReference>
<dbReference type="GO" id="GO:0050482">
    <property type="term" value="P:arachidonate secretion"/>
    <property type="evidence" value="ECO:0007669"/>
    <property type="project" value="InterPro"/>
</dbReference>
<dbReference type="GO" id="GO:0016042">
    <property type="term" value="P:lipid catabolic process"/>
    <property type="evidence" value="ECO:0007669"/>
    <property type="project" value="UniProtKB-KW"/>
</dbReference>
<dbReference type="GO" id="GO:0006644">
    <property type="term" value="P:phospholipid metabolic process"/>
    <property type="evidence" value="ECO:0007669"/>
    <property type="project" value="InterPro"/>
</dbReference>
<dbReference type="CDD" id="cd00125">
    <property type="entry name" value="PLA2c"/>
    <property type="match status" value="1"/>
</dbReference>
<dbReference type="FunFam" id="1.20.90.10:FF:000007">
    <property type="entry name" value="Acidic phospholipase A2"/>
    <property type="match status" value="1"/>
</dbReference>
<dbReference type="Gene3D" id="1.20.90.10">
    <property type="entry name" value="Phospholipase A2 domain"/>
    <property type="match status" value="1"/>
</dbReference>
<dbReference type="InterPro" id="IPR001211">
    <property type="entry name" value="PLipase_A2"/>
</dbReference>
<dbReference type="InterPro" id="IPR033112">
    <property type="entry name" value="PLipase_A2_Asp_AS"/>
</dbReference>
<dbReference type="InterPro" id="IPR016090">
    <property type="entry name" value="PLipase_A2_dom"/>
</dbReference>
<dbReference type="InterPro" id="IPR036444">
    <property type="entry name" value="PLipase_A2_dom_sf"/>
</dbReference>
<dbReference type="InterPro" id="IPR033113">
    <property type="entry name" value="PLipase_A2_His_AS"/>
</dbReference>
<dbReference type="PANTHER" id="PTHR11716:SF106">
    <property type="entry name" value="PHOSPHOLIPASE A2 A2-ACTITOXIN-UCS2A-LIKE"/>
    <property type="match status" value="1"/>
</dbReference>
<dbReference type="PANTHER" id="PTHR11716">
    <property type="entry name" value="PHOSPHOLIPASE A2 FAMILY MEMBER"/>
    <property type="match status" value="1"/>
</dbReference>
<dbReference type="Pfam" id="PF00068">
    <property type="entry name" value="Phospholip_A2_1"/>
    <property type="match status" value="1"/>
</dbReference>
<dbReference type="PRINTS" id="PR00389">
    <property type="entry name" value="PHPHLIPASEA2"/>
</dbReference>
<dbReference type="SMART" id="SM00085">
    <property type="entry name" value="PA2c"/>
    <property type="match status" value="1"/>
</dbReference>
<dbReference type="SUPFAM" id="SSF48619">
    <property type="entry name" value="Phospholipase A2, PLA2"/>
    <property type="match status" value="1"/>
</dbReference>
<dbReference type="PROSITE" id="PS00119">
    <property type="entry name" value="PA2_ASP"/>
    <property type="match status" value="1"/>
</dbReference>
<dbReference type="PROSITE" id="PS00118">
    <property type="entry name" value="PA2_HIS"/>
    <property type="match status" value="1"/>
</dbReference>
<keyword id="KW-0002">3D-structure</keyword>
<keyword id="KW-0106">Calcium</keyword>
<keyword id="KW-0903">Direct protein sequencing</keyword>
<keyword id="KW-1015">Disulfide bond</keyword>
<keyword id="KW-0378">Hydrolase</keyword>
<keyword id="KW-0442">Lipid degradation</keyword>
<keyword id="KW-0443">Lipid metabolism</keyword>
<keyword id="KW-0479">Metal-binding</keyword>
<keyword id="KW-0959">Myotoxin</keyword>
<keyword id="KW-0528">Neurotoxin</keyword>
<keyword id="KW-0638">Presynaptic neurotoxin</keyword>
<keyword id="KW-0964">Secreted</keyword>
<keyword id="KW-0800">Toxin</keyword>
<comment type="function">
    <text>Snake venom phospholipase A2 (PLA2) that inhibits neuromuscular transmission by blocking acetylcholine release from the nerve termini. Is directly toxic to skeletal muscle upon local application in vivo (dystrophic effect). Also has direct nephrotoxicity in experimental mice; a single subcutaneous dose (1.38 ug/kg) produces renal tubular and glomerular damage within 24 hours (PubMed:7580101). PLA2 catalyzes the calcium-dependent hydrolysis of the 2-acyl groups in 3-sn-phosphoglycerides.</text>
</comment>
<comment type="catalytic activity">
    <reaction evidence="2 3">
        <text>a 1,2-diacyl-sn-glycero-3-phosphocholine + H2O = a 1-acyl-sn-glycero-3-phosphocholine + a fatty acid + H(+)</text>
        <dbReference type="Rhea" id="RHEA:15801"/>
        <dbReference type="ChEBI" id="CHEBI:15377"/>
        <dbReference type="ChEBI" id="CHEBI:15378"/>
        <dbReference type="ChEBI" id="CHEBI:28868"/>
        <dbReference type="ChEBI" id="CHEBI:57643"/>
        <dbReference type="ChEBI" id="CHEBI:58168"/>
        <dbReference type="EC" id="3.1.1.4"/>
    </reaction>
</comment>
<comment type="cofactor">
    <cofactor evidence="1">
        <name>Ca(2+)</name>
        <dbReference type="ChEBI" id="CHEBI:29108"/>
    </cofactor>
    <text evidence="1">Binds 1 Ca(2+) ion.</text>
</comment>
<comment type="subunit">
    <text>Monomer.</text>
</comment>
<comment type="subcellular location">
    <subcellularLocation>
        <location>Secreted</location>
    </subcellularLocation>
</comment>
<comment type="tissue specificity">
    <text>Expressed by the venom gland.</text>
</comment>
<comment type="toxic dose">
    <text>LD(50) is 0.025 mg/kg by intravenous injection.</text>
</comment>
<comment type="miscellaneous">
    <text>Activity and lethal neurotoxicity are lost upon modification with p-bromophenacyl bromide.</text>
</comment>
<comment type="similarity">
    <text evidence="7">Belongs to the phospholipase A2 family. Group I subfamily. D49 sub-subfamily.</text>
</comment>
<evidence type="ECO:0000250" key="1">
    <source>
        <dbReference type="UniProtKB" id="P60043"/>
    </source>
</evidence>
<evidence type="ECO:0000255" key="2">
    <source>
        <dbReference type="PROSITE-ProRule" id="PRU10035"/>
    </source>
</evidence>
<evidence type="ECO:0000255" key="3">
    <source>
        <dbReference type="PROSITE-ProRule" id="PRU10036"/>
    </source>
</evidence>
<evidence type="ECO:0000269" key="4">
    <source>
    </source>
</evidence>
<evidence type="ECO:0000269" key="5">
    <source>
    </source>
</evidence>
<evidence type="ECO:0000303" key="6">
    <source>
    </source>
</evidence>
<evidence type="ECO:0000305" key="7"/>
<evidence type="ECO:0007744" key="8">
    <source>
        <dbReference type="PDB" id="1AE7"/>
    </source>
</evidence>
<evidence type="ECO:0007829" key="9">
    <source>
        <dbReference type="PDB" id="1AE7"/>
    </source>
</evidence>
<evidence type="ECO:0007829" key="10">
    <source>
        <dbReference type="PDB" id="4E4C"/>
    </source>
</evidence>
<protein>
    <recommendedName>
        <fullName evidence="6">Basic phospholipase A2 notexin</fullName>
        <shortName>svPLA2</shortName>
        <ecNumber>3.1.1.4</ecNumber>
    </recommendedName>
    <alternativeName>
        <fullName>Phosphatidylcholine 2-acylhydrolase</fullName>
    </alternativeName>
</protein>
<feature type="chain" id="PRO_0000161675" description="Basic phospholipase A2 notexin">
    <location>
        <begin position="1"/>
        <end position="119"/>
    </location>
</feature>
<feature type="active site" evidence="4">
    <location>
        <position position="48"/>
    </location>
</feature>
<feature type="active site" evidence="4">
    <location>
        <position position="93"/>
    </location>
</feature>
<feature type="binding site" evidence="1">
    <location>
        <position position="28"/>
    </location>
    <ligand>
        <name>Ca(2+)</name>
        <dbReference type="ChEBI" id="CHEBI:29108"/>
    </ligand>
</feature>
<feature type="binding site" evidence="1">
    <location>
        <position position="30"/>
    </location>
    <ligand>
        <name>Ca(2+)</name>
        <dbReference type="ChEBI" id="CHEBI:29108"/>
    </ligand>
</feature>
<feature type="binding site" evidence="1">
    <location>
        <position position="32"/>
    </location>
    <ligand>
        <name>Ca(2+)</name>
        <dbReference type="ChEBI" id="CHEBI:29108"/>
    </ligand>
</feature>
<feature type="binding site" evidence="1">
    <location>
        <position position="49"/>
    </location>
    <ligand>
        <name>Ca(2+)</name>
        <dbReference type="ChEBI" id="CHEBI:29108"/>
    </ligand>
</feature>
<feature type="disulfide bond" evidence="5 8">
    <location>
        <begin position="11"/>
        <end position="71"/>
    </location>
</feature>
<feature type="disulfide bond" evidence="5 8">
    <location>
        <begin position="27"/>
        <end position="118"/>
    </location>
</feature>
<feature type="disulfide bond" evidence="5 8">
    <location>
        <begin position="29"/>
        <end position="45"/>
    </location>
</feature>
<feature type="disulfide bond" evidence="5 8">
    <location>
        <begin position="44"/>
        <end position="99"/>
    </location>
</feature>
<feature type="disulfide bond" evidence="5 8">
    <location>
        <begin position="51"/>
        <end position="92"/>
    </location>
</feature>
<feature type="disulfide bond" evidence="5 8">
    <location>
        <begin position="60"/>
        <end position="85"/>
    </location>
</feature>
<feature type="disulfide bond" evidence="5 8">
    <location>
        <begin position="78"/>
        <end position="90"/>
    </location>
</feature>
<feature type="sequence variant" description="In variant S.">
    <original>K</original>
    <variation>R</variation>
    <location>
        <position position="16"/>
    </location>
</feature>
<feature type="helix" evidence="10">
    <location>
        <begin position="2"/>
        <end position="12"/>
    </location>
</feature>
<feature type="turn" evidence="10">
    <location>
        <begin position="13"/>
        <end position="15"/>
    </location>
</feature>
<feature type="helix" evidence="10">
    <location>
        <begin position="19"/>
        <end position="22"/>
    </location>
</feature>
<feature type="strand" evidence="10">
    <location>
        <begin position="23"/>
        <end position="25"/>
    </location>
</feature>
<feature type="turn" evidence="10">
    <location>
        <begin position="26"/>
        <end position="28"/>
    </location>
</feature>
<feature type="strand" evidence="10">
    <location>
        <begin position="29"/>
        <end position="31"/>
    </location>
</feature>
<feature type="helix" evidence="10">
    <location>
        <begin position="40"/>
        <end position="57"/>
    </location>
</feature>
<feature type="turn" evidence="10">
    <location>
        <begin position="62"/>
        <end position="64"/>
    </location>
</feature>
<feature type="strand" evidence="10">
    <location>
        <begin position="69"/>
        <end position="72"/>
    </location>
</feature>
<feature type="strand" evidence="10">
    <location>
        <begin position="75"/>
        <end position="78"/>
    </location>
</feature>
<feature type="strand" evidence="9">
    <location>
        <begin position="81"/>
        <end position="83"/>
    </location>
</feature>
<feature type="helix" evidence="10">
    <location>
        <begin position="84"/>
        <end position="102"/>
    </location>
</feature>
<feature type="helix" evidence="10">
    <location>
        <begin position="107"/>
        <end position="109"/>
    </location>
</feature>
<feature type="helix" evidence="10">
    <location>
        <begin position="114"/>
        <end position="117"/>
    </location>
</feature>
<organism>
    <name type="scientific">Notechis scutatus scutatus</name>
    <name type="common">Mainland tiger snake</name>
    <name type="synonym">Common tiger snake</name>
    <dbReference type="NCBI Taxonomy" id="70142"/>
    <lineage>
        <taxon>Eukaryota</taxon>
        <taxon>Metazoa</taxon>
        <taxon>Chordata</taxon>
        <taxon>Craniata</taxon>
        <taxon>Vertebrata</taxon>
        <taxon>Euteleostomi</taxon>
        <taxon>Lepidosauria</taxon>
        <taxon>Squamata</taxon>
        <taxon>Bifurcata</taxon>
        <taxon>Unidentata</taxon>
        <taxon>Episquamata</taxon>
        <taxon>Toxicofera</taxon>
        <taxon>Serpentes</taxon>
        <taxon>Colubroidea</taxon>
        <taxon>Elapidae</taxon>
        <taxon>Hydrophiinae</taxon>
        <taxon>Notechis</taxon>
    </lineage>
</organism>